<protein>
    <recommendedName>
        <fullName evidence="1">tRNA dimethylallyltransferase</fullName>
        <ecNumber evidence="1">2.5.1.75</ecNumber>
    </recommendedName>
    <alternativeName>
        <fullName evidence="1">Dimethylallyl diphosphate:tRNA dimethylallyltransferase</fullName>
        <shortName evidence="1">DMAPP:tRNA dimethylallyltransferase</shortName>
        <shortName evidence="1">DMATase</shortName>
    </alternativeName>
    <alternativeName>
        <fullName evidence="1">Isopentenyl-diphosphate:tRNA isopentenyltransferase</fullName>
        <shortName evidence="1">IPP transferase</shortName>
        <shortName evidence="1">IPPT</shortName>
        <shortName evidence="1">IPTase</shortName>
    </alternativeName>
</protein>
<feature type="chain" id="PRO_1000191873" description="tRNA dimethylallyltransferase">
    <location>
        <begin position="1"/>
        <end position="294"/>
    </location>
</feature>
<feature type="region of interest" description="Interaction with substrate tRNA" evidence="1">
    <location>
        <begin position="36"/>
        <end position="39"/>
    </location>
</feature>
<feature type="binding site" evidence="1">
    <location>
        <begin position="10"/>
        <end position="17"/>
    </location>
    <ligand>
        <name>ATP</name>
        <dbReference type="ChEBI" id="CHEBI:30616"/>
    </ligand>
</feature>
<feature type="binding site" evidence="1">
    <location>
        <begin position="12"/>
        <end position="17"/>
    </location>
    <ligand>
        <name>substrate</name>
    </ligand>
</feature>
<feature type="site" description="Interaction with substrate tRNA" evidence="1">
    <location>
        <position position="99"/>
    </location>
</feature>
<feature type="site" description="Interaction with substrate tRNA" evidence="1">
    <location>
        <position position="128"/>
    </location>
</feature>
<gene>
    <name evidence="1" type="primary">miaA</name>
    <name type="ordered locus">WRi_007880</name>
</gene>
<name>MIAA_WOLWR</name>
<reference key="1">
    <citation type="journal article" date="2009" name="Proc. Natl. Acad. Sci. U.S.A.">
        <title>The mosaic genome structure of the Wolbachia wRi strain infecting Drosophila simulans.</title>
        <authorList>
            <person name="Klasson L."/>
            <person name="Westberg J."/>
            <person name="Sapountzis P."/>
            <person name="Naeslund K."/>
            <person name="Lutnaes Y."/>
            <person name="Darby A.C."/>
            <person name="Veneti Z."/>
            <person name="Chen L."/>
            <person name="Braig H.R."/>
            <person name="Garrett R."/>
            <person name="Bourtzis K."/>
            <person name="Andersson S.G."/>
        </authorList>
    </citation>
    <scope>NUCLEOTIDE SEQUENCE [LARGE SCALE GENOMIC DNA]</scope>
    <source>
        <strain>wRi</strain>
    </source>
</reference>
<sequence length="294" mass="33688">MKNNIVIITGITASGKSELCDNLIEKYGNISIINCDSKQVYEEIPIITAQPPKQEVFYKLYGYVSAKENYSVGLWLEDLEKEVNHALENAQIPIITGGSGLYISSLIKGLSSMPQISQKVRKNVSELRKNLSKEEFYKLALSKDPRIQGKVFMNDSHRLSRALEVITETGKSIFVWQENRQPPLFNNFKIYTILPKREDVYRKINSRFITMIENGAIDEVKKLLSMNLAPHLPAMKAHGVPEIIKYLKGEITLDEAIQIAQTNTRHYAKRQYTWFKKQFLNAEVIDCANKLKIF</sequence>
<keyword id="KW-0067">ATP-binding</keyword>
<keyword id="KW-0460">Magnesium</keyword>
<keyword id="KW-0547">Nucleotide-binding</keyword>
<keyword id="KW-0808">Transferase</keyword>
<keyword id="KW-0819">tRNA processing</keyword>
<proteinExistence type="inferred from homology"/>
<comment type="function">
    <text evidence="1">Catalyzes the transfer of a dimethylallyl group onto the adenine at position 37 in tRNAs that read codons beginning with uridine, leading to the formation of N6-(dimethylallyl)adenosine (i(6)A).</text>
</comment>
<comment type="catalytic activity">
    <reaction evidence="1">
        <text>adenosine(37) in tRNA + dimethylallyl diphosphate = N(6)-dimethylallyladenosine(37) in tRNA + diphosphate</text>
        <dbReference type="Rhea" id="RHEA:26482"/>
        <dbReference type="Rhea" id="RHEA-COMP:10162"/>
        <dbReference type="Rhea" id="RHEA-COMP:10375"/>
        <dbReference type="ChEBI" id="CHEBI:33019"/>
        <dbReference type="ChEBI" id="CHEBI:57623"/>
        <dbReference type="ChEBI" id="CHEBI:74411"/>
        <dbReference type="ChEBI" id="CHEBI:74415"/>
        <dbReference type="EC" id="2.5.1.75"/>
    </reaction>
</comment>
<comment type="cofactor">
    <cofactor evidence="1">
        <name>Mg(2+)</name>
        <dbReference type="ChEBI" id="CHEBI:18420"/>
    </cofactor>
</comment>
<comment type="subunit">
    <text evidence="1">Monomer.</text>
</comment>
<comment type="similarity">
    <text evidence="1">Belongs to the IPP transferase family.</text>
</comment>
<dbReference type="EC" id="2.5.1.75" evidence="1"/>
<dbReference type="EMBL" id="CP001391">
    <property type="protein sequence ID" value="ACN95535.1"/>
    <property type="molecule type" value="Genomic_DNA"/>
</dbReference>
<dbReference type="RefSeq" id="WP_006280293.1">
    <property type="nucleotide sequence ID" value="NZ_MKIF01000041.1"/>
</dbReference>
<dbReference type="SMR" id="C0R3P3"/>
<dbReference type="STRING" id="66084.WRi_007880"/>
<dbReference type="KEGG" id="wri:WRi_007880"/>
<dbReference type="HOGENOM" id="CLU_032616_0_1_5"/>
<dbReference type="Proteomes" id="UP000001293">
    <property type="component" value="Chromosome"/>
</dbReference>
<dbReference type="GO" id="GO:0005524">
    <property type="term" value="F:ATP binding"/>
    <property type="evidence" value="ECO:0007669"/>
    <property type="project" value="UniProtKB-UniRule"/>
</dbReference>
<dbReference type="GO" id="GO:0052381">
    <property type="term" value="F:tRNA dimethylallyltransferase activity"/>
    <property type="evidence" value="ECO:0007669"/>
    <property type="project" value="UniProtKB-UniRule"/>
</dbReference>
<dbReference type="GO" id="GO:0006400">
    <property type="term" value="P:tRNA modification"/>
    <property type="evidence" value="ECO:0007669"/>
    <property type="project" value="TreeGrafter"/>
</dbReference>
<dbReference type="Gene3D" id="1.10.20.140">
    <property type="match status" value="1"/>
</dbReference>
<dbReference type="Gene3D" id="3.40.50.300">
    <property type="entry name" value="P-loop containing nucleotide triphosphate hydrolases"/>
    <property type="match status" value="1"/>
</dbReference>
<dbReference type="HAMAP" id="MF_00185">
    <property type="entry name" value="IPP_trans"/>
    <property type="match status" value="1"/>
</dbReference>
<dbReference type="InterPro" id="IPR039657">
    <property type="entry name" value="Dimethylallyltransferase"/>
</dbReference>
<dbReference type="InterPro" id="IPR018022">
    <property type="entry name" value="IPT"/>
</dbReference>
<dbReference type="InterPro" id="IPR027417">
    <property type="entry name" value="P-loop_NTPase"/>
</dbReference>
<dbReference type="NCBIfam" id="TIGR00174">
    <property type="entry name" value="miaA"/>
    <property type="match status" value="1"/>
</dbReference>
<dbReference type="PANTHER" id="PTHR11088">
    <property type="entry name" value="TRNA DIMETHYLALLYLTRANSFERASE"/>
    <property type="match status" value="1"/>
</dbReference>
<dbReference type="PANTHER" id="PTHR11088:SF60">
    <property type="entry name" value="TRNA DIMETHYLALLYLTRANSFERASE"/>
    <property type="match status" value="1"/>
</dbReference>
<dbReference type="Pfam" id="PF01715">
    <property type="entry name" value="IPPT"/>
    <property type="match status" value="1"/>
</dbReference>
<dbReference type="SUPFAM" id="SSF52540">
    <property type="entry name" value="P-loop containing nucleoside triphosphate hydrolases"/>
    <property type="match status" value="1"/>
</dbReference>
<evidence type="ECO:0000255" key="1">
    <source>
        <dbReference type="HAMAP-Rule" id="MF_00185"/>
    </source>
</evidence>
<accession>C0R3P3</accession>
<organism>
    <name type="scientific">Wolbachia sp. subsp. Drosophila simulans (strain wRi)</name>
    <dbReference type="NCBI Taxonomy" id="66084"/>
    <lineage>
        <taxon>Bacteria</taxon>
        <taxon>Pseudomonadati</taxon>
        <taxon>Pseudomonadota</taxon>
        <taxon>Alphaproteobacteria</taxon>
        <taxon>Rickettsiales</taxon>
        <taxon>Anaplasmataceae</taxon>
        <taxon>Wolbachieae</taxon>
        <taxon>Wolbachia</taxon>
    </lineage>
</organism>